<name>GLPC_RAT</name>
<dbReference type="EMBL" id="AY234182">
    <property type="protein sequence ID" value="AAP70023.1"/>
    <property type="molecule type" value="mRNA"/>
</dbReference>
<dbReference type="EMBL" id="CH473974">
    <property type="protein sequence ID" value="EDL76190.1"/>
    <property type="molecule type" value="Genomic_DNA"/>
</dbReference>
<dbReference type="EMBL" id="BC103641">
    <property type="protein sequence ID" value="AAI03642.1"/>
    <property type="molecule type" value="mRNA"/>
</dbReference>
<dbReference type="RefSeq" id="NP_001013251.1">
    <property type="nucleotide sequence ID" value="NM_001013233.1"/>
</dbReference>
<dbReference type="SMR" id="Q6XFR6"/>
<dbReference type="FunCoup" id="Q6XFR6">
    <property type="interactions" value="261"/>
</dbReference>
<dbReference type="STRING" id="10116.ENSRNOP00000049537"/>
<dbReference type="iPTMnet" id="Q6XFR6"/>
<dbReference type="PhosphoSitePlus" id="Q6XFR6"/>
<dbReference type="PaxDb" id="10116-ENSRNOP00000049537"/>
<dbReference type="Ensembl" id="ENSRNOT00000046369.4">
    <property type="protein sequence ID" value="ENSRNOP00000049537.3"/>
    <property type="gene ID" value="ENSRNOG00000029939.4"/>
</dbReference>
<dbReference type="GeneID" id="364837"/>
<dbReference type="KEGG" id="rno:364837"/>
<dbReference type="UCSC" id="RGD:1310295">
    <property type="organism name" value="rat"/>
</dbReference>
<dbReference type="AGR" id="RGD:1310295"/>
<dbReference type="CTD" id="2995"/>
<dbReference type="RGD" id="1310295">
    <property type="gene designation" value="Gypc"/>
</dbReference>
<dbReference type="eggNOG" id="ENOG502S5JS">
    <property type="taxonomic scope" value="Eukaryota"/>
</dbReference>
<dbReference type="GeneTree" id="ENSGT00510000049102"/>
<dbReference type="HOGENOM" id="CLU_176666_0_0_1"/>
<dbReference type="InParanoid" id="Q6XFR6"/>
<dbReference type="OMA" id="IMEIAII"/>
<dbReference type="OrthoDB" id="78217at9989"/>
<dbReference type="PhylomeDB" id="Q6XFR6"/>
<dbReference type="TreeFam" id="TF337016"/>
<dbReference type="PRO" id="PR:Q6XFR6"/>
<dbReference type="Proteomes" id="UP000002494">
    <property type="component" value="Chromosome 18"/>
</dbReference>
<dbReference type="Proteomes" id="UP000234681">
    <property type="component" value="Chromosome 18"/>
</dbReference>
<dbReference type="Bgee" id="ENSRNOG00000029939">
    <property type="expression patterns" value="Expressed in heart and 19 other cell types or tissues"/>
</dbReference>
<dbReference type="GO" id="GO:0030863">
    <property type="term" value="C:cortical cytoskeleton"/>
    <property type="evidence" value="ECO:0000266"/>
    <property type="project" value="RGD"/>
</dbReference>
<dbReference type="GO" id="GO:0016020">
    <property type="term" value="C:membrane"/>
    <property type="evidence" value="ECO:0000266"/>
    <property type="project" value="RGD"/>
</dbReference>
<dbReference type="GO" id="GO:0005886">
    <property type="term" value="C:plasma membrane"/>
    <property type="evidence" value="ECO:0007669"/>
    <property type="project" value="UniProtKB-SubCell"/>
</dbReference>
<dbReference type="InterPro" id="IPR042192">
    <property type="entry name" value="Glycophorin-C"/>
</dbReference>
<dbReference type="InterPro" id="IPR003585">
    <property type="entry name" value="Neurexin-like"/>
</dbReference>
<dbReference type="PANTHER" id="PTHR47614">
    <property type="entry name" value="GLYCOPHORIN-C"/>
    <property type="match status" value="1"/>
</dbReference>
<dbReference type="PANTHER" id="PTHR47614:SF2">
    <property type="entry name" value="GLYCOPHORIN-C"/>
    <property type="match status" value="1"/>
</dbReference>
<dbReference type="SMART" id="SM00294">
    <property type="entry name" value="4.1m"/>
    <property type="match status" value="1"/>
</dbReference>
<sequence>MSSPVRTPPPERLEPNPGMSYAVMEIAIIAAVITAVALVLVCLLFLMLRYLYRHKGTYYTNEAKGTEFAESADAALQSDPALQDAGDTSKKEYFI</sequence>
<reference key="1">
    <citation type="submission" date="2003-02" db="EMBL/GenBank/DDBJ databases">
        <title>Sequence and evolution of glycophorin C (GPC) proteins.</title>
        <authorList>
            <person name="Chen Y."/>
            <person name="Peng J."/>
            <person name="Huang C.-H."/>
        </authorList>
    </citation>
    <scope>NUCLEOTIDE SEQUENCE [MRNA]</scope>
</reference>
<reference key="2">
    <citation type="submission" date="2005-07" db="EMBL/GenBank/DDBJ databases">
        <authorList>
            <person name="Mural R.J."/>
            <person name="Adams M.D."/>
            <person name="Myers E.W."/>
            <person name="Smith H.O."/>
            <person name="Venter J.C."/>
        </authorList>
    </citation>
    <scope>NUCLEOTIDE SEQUENCE [LARGE SCALE GENOMIC DNA]</scope>
</reference>
<reference key="3">
    <citation type="journal article" date="2004" name="Genome Res.">
        <title>The status, quality, and expansion of the NIH full-length cDNA project: the Mammalian Gene Collection (MGC).</title>
        <authorList>
            <consortium name="The MGC Project Team"/>
        </authorList>
    </citation>
    <scope>NUCLEOTIDE SEQUENCE [LARGE SCALE MRNA]</scope>
    <source>
        <tissue>Heart</tissue>
    </source>
</reference>
<reference key="4">
    <citation type="journal article" date="2012" name="Nat. Commun.">
        <title>Quantitative maps of protein phosphorylation sites across 14 different rat organs and tissues.</title>
        <authorList>
            <person name="Lundby A."/>
            <person name="Secher A."/>
            <person name="Lage K."/>
            <person name="Nordsborg N.B."/>
            <person name="Dmytriyev A."/>
            <person name="Lundby C."/>
            <person name="Olsen J.V."/>
        </authorList>
    </citation>
    <scope>PHOSPHORYLATION [LARGE SCALE ANALYSIS] AT SER-78</scope>
    <scope>IDENTIFICATION BY MASS SPECTROMETRY [LARGE SCALE ANALYSIS]</scope>
</reference>
<keyword id="KW-1003">Cell membrane</keyword>
<keyword id="KW-0472">Membrane</keyword>
<keyword id="KW-0597">Phosphoprotein</keyword>
<keyword id="KW-1185">Reference proteome</keyword>
<keyword id="KW-0812">Transmembrane</keyword>
<keyword id="KW-1133">Transmembrane helix</keyword>
<feature type="chain" id="PRO_0000378455" description="Glycophorin-C">
    <location>
        <begin position="1"/>
        <end position="95"/>
    </location>
</feature>
<feature type="topological domain" description="Extracellular" evidence="3">
    <location>
        <begin position="1"/>
        <end position="25"/>
    </location>
</feature>
<feature type="transmembrane region" description="Helical; Signal-anchor for type III membrane protein" evidence="3">
    <location>
        <begin position="26"/>
        <end position="46"/>
    </location>
</feature>
<feature type="topological domain" description="Cytoplasmic" evidence="3">
    <location>
        <begin position="47"/>
        <end position="95"/>
    </location>
</feature>
<feature type="modified residue" description="Phosphoserine" evidence="2">
    <location>
        <position position="71"/>
    </location>
</feature>
<feature type="modified residue" description="Phosphoserine" evidence="5">
    <location>
        <position position="78"/>
    </location>
</feature>
<feature type="modified residue" description="Phosphoserine" evidence="2">
    <location>
        <position position="89"/>
    </location>
</feature>
<gene>
    <name type="primary">Gypc</name>
</gene>
<accession>Q6XFR6</accession>
<protein>
    <recommendedName>
        <fullName>Glycophorin-C</fullName>
    </recommendedName>
    <cdAntigenName>CD236</cdAntigenName>
</protein>
<comment type="subcellular location">
    <subcellularLocation>
        <location evidence="1">Cell membrane</location>
        <topology evidence="1">Single-pass type III membrane protein</topology>
    </subcellularLocation>
    <text evidence="1">Linked to the membrane via band 4.1.</text>
</comment>
<comment type="similarity">
    <text evidence="4">Belongs to the glycophorin-C family.</text>
</comment>
<proteinExistence type="evidence at protein level"/>
<organism>
    <name type="scientific">Rattus norvegicus</name>
    <name type="common">Rat</name>
    <dbReference type="NCBI Taxonomy" id="10116"/>
    <lineage>
        <taxon>Eukaryota</taxon>
        <taxon>Metazoa</taxon>
        <taxon>Chordata</taxon>
        <taxon>Craniata</taxon>
        <taxon>Vertebrata</taxon>
        <taxon>Euteleostomi</taxon>
        <taxon>Mammalia</taxon>
        <taxon>Eutheria</taxon>
        <taxon>Euarchontoglires</taxon>
        <taxon>Glires</taxon>
        <taxon>Rodentia</taxon>
        <taxon>Myomorpha</taxon>
        <taxon>Muroidea</taxon>
        <taxon>Muridae</taxon>
        <taxon>Murinae</taxon>
        <taxon>Rattus</taxon>
    </lineage>
</organism>
<evidence type="ECO:0000250" key="1"/>
<evidence type="ECO:0000250" key="2">
    <source>
        <dbReference type="UniProtKB" id="P04921"/>
    </source>
</evidence>
<evidence type="ECO:0000255" key="3"/>
<evidence type="ECO:0000305" key="4"/>
<evidence type="ECO:0007744" key="5">
    <source>
    </source>
</evidence>